<accession>B1YNP3</accession>
<evidence type="ECO:0000255" key="1">
    <source>
        <dbReference type="HAMAP-Rule" id="MF_01274"/>
    </source>
</evidence>
<proteinExistence type="inferred from homology"/>
<protein>
    <recommendedName>
        <fullName evidence="1">Type III pantothenate kinase</fullName>
        <ecNumber evidence="1">2.7.1.33</ecNumber>
    </recommendedName>
    <alternativeName>
        <fullName evidence="1">PanK-III</fullName>
    </alternativeName>
    <alternativeName>
        <fullName evidence="1">Pantothenic acid kinase</fullName>
    </alternativeName>
</protein>
<sequence length="262" mass="27424">MNKPHLLIDAGNSRIKWALADARRTLVDTGAFGHTRDGGADPDWSALPRPHGAWISNVAGADVAARLDALLDARWPGLPRTTIRSRPAQCGVTNGYTTPDQLGSDRWAGLIGARAAFPGEHLLIATFGTATTLEALRADGRFTGGLIAPGWALMMRALGTHTAQLPTLTTDIASGLLAGAQAEPFQVDTPRSLSAGCLYAQAGLIERAWRDLADAWQAPVRLVLAGGAADDVARALTLPHTRHDALILSGLALIAAEGAAQD</sequence>
<feature type="chain" id="PRO_1000140225" description="Type III pantothenate kinase">
    <location>
        <begin position="1"/>
        <end position="262"/>
    </location>
</feature>
<feature type="active site" description="Proton acceptor" evidence="1">
    <location>
        <position position="105"/>
    </location>
</feature>
<feature type="binding site" evidence="1">
    <location>
        <begin position="9"/>
        <end position="16"/>
    </location>
    <ligand>
        <name>ATP</name>
        <dbReference type="ChEBI" id="CHEBI:30616"/>
    </ligand>
</feature>
<feature type="binding site" evidence="1">
    <location>
        <position position="96"/>
    </location>
    <ligand>
        <name>substrate</name>
    </ligand>
</feature>
<feature type="binding site" evidence="1">
    <location>
        <begin position="103"/>
        <end position="106"/>
    </location>
    <ligand>
        <name>substrate</name>
    </ligand>
</feature>
<feature type="binding site" evidence="1">
    <location>
        <position position="129"/>
    </location>
    <ligand>
        <name>ATP</name>
        <dbReference type="ChEBI" id="CHEBI:30616"/>
    </ligand>
</feature>
<feature type="binding site" evidence="1">
    <location>
        <position position="189"/>
    </location>
    <ligand>
        <name>substrate</name>
    </ligand>
</feature>
<reference key="1">
    <citation type="submission" date="2008-04" db="EMBL/GenBank/DDBJ databases">
        <title>Complete sequence of chromosome 1 of Burkholderia ambifaria MC40-6.</title>
        <authorList>
            <person name="Copeland A."/>
            <person name="Lucas S."/>
            <person name="Lapidus A."/>
            <person name="Glavina del Rio T."/>
            <person name="Dalin E."/>
            <person name="Tice H."/>
            <person name="Pitluck S."/>
            <person name="Chain P."/>
            <person name="Malfatti S."/>
            <person name="Shin M."/>
            <person name="Vergez L."/>
            <person name="Lang D."/>
            <person name="Schmutz J."/>
            <person name="Larimer F."/>
            <person name="Land M."/>
            <person name="Hauser L."/>
            <person name="Kyrpides N."/>
            <person name="Lykidis A."/>
            <person name="Ramette A."/>
            <person name="Konstantinidis K."/>
            <person name="Tiedje J."/>
            <person name="Richardson P."/>
        </authorList>
    </citation>
    <scope>NUCLEOTIDE SEQUENCE [LARGE SCALE GENOMIC DNA]</scope>
    <source>
        <strain>MC40-6</strain>
    </source>
</reference>
<gene>
    <name evidence="1" type="primary">coaX</name>
    <name type="ordered locus">BamMC406_2817</name>
</gene>
<comment type="function">
    <text evidence="1">Catalyzes the phosphorylation of pantothenate (Pan), the first step in CoA biosynthesis.</text>
</comment>
<comment type="catalytic activity">
    <reaction evidence="1">
        <text>(R)-pantothenate + ATP = (R)-4'-phosphopantothenate + ADP + H(+)</text>
        <dbReference type="Rhea" id="RHEA:16373"/>
        <dbReference type="ChEBI" id="CHEBI:10986"/>
        <dbReference type="ChEBI" id="CHEBI:15378"/>
        <dbReference type="ChEBI" id="CHEBI:29032"/>
        <dbReference type="ChEBI" id="CHEBI:30616"/>
        <dbReference type="ChEBI" id="CHEBI:456216"/>
        <dbReference type="EC" id="2.7.1.33"/>
    </reaction>
</comment>
<comment type="cofactor">
    <cofactor evidence="1">
        <name>NH4(+)</name>
        <dbReference type="ChEBI" id="CHEBI:28938"/>
    </cofactor>
    <cofactor evidence="1">
        <name>K(+)</name>
        <dbReference type="ChEBI" id="CHEBI:29103"/>
    </cofactor>
    <text evidence="1">A monovalent cation. Ammonium or potassium.</text>
</comment>
<comment type="pathway">
    <text evidence="1">Cofactor biosynthesis; coenzyme A biosynthesis; CoA from (R)-pantothenate: step 1/5.</text>
</comment>
<comment type="subunit">
    <text evidence="1">Homodimer.</text>
</comment>
<comment type="subcellular location">
    <subcellularLocation>
        <location evidence="1">Cytoplasm</location>
    </subcellularLocation>
</comment>
<comment type="similarity">
    <text evidence="1">Belongs to the type III pantothenate kinase family.</text>
</comment>
<dbReference type="EC" id="2.7.1.33" evidence="1"/>
<dbReference type="EMBL" id="CP001025">
    <property type="protein sequence ID" value="ACB65293.1"/>
    <property type="molecule type" value="Genomic_DNA"/>
</dbReference>
<dbReference type="RefSeq" id="WP_012364806.1">
    <property type="nucleotide sequence ID" value="NC_010551.1"/>
</dbReference>
<dbReference type="SMR" id="B1YNP3"/>
<dbReference type="KEGG" id="bac:BamMC406_2817"/>
<dbReference type="HOGENOM" id="CLU_066627_0_0_4"/>
<dbReference type="OrthoDB" id="9781305at2"/>
<dbReference type="UniPathway" id="UPA00241">
    <property type="reaction ID" value="UER00352"/>
</dbReference>
<dbReference type="Proteomes" id="UP000001680">
    <property type="component" value="Chromosome 1"/>
</dbReference>
<dbReference type="GO" id="GO:0005737">
    <property type="term" value="C:cytoplasm"/>
    <property type="evidence" value="ECO:0007669"/>
    <property type="project" value="UniProtKB-SubCell"/>
</dbReference>
<dbReference type="GO" id="GO:0005524">
    <property type="term" value="F:ATP binding"/>
    <property type="evidence" value="ECO:0007669"/>
    <property type="project" value="UniProtKB-UniRule"/>
</dbReference>
<dbReference type="GO" id="GO:0004594">
    <property type="term" value="F:pantothenate kinase activity"/>
    <property type="evidence" value="ECO:0007669"/>
    <property type="project" value="UniProtKB-UniRule"/>
</dbReference>
<dbReference type="GO" id="GO:0015937">
    <property type="term" value="P:coenzyme A biosynthetic process"/>
    <property type="evidence" value="ECO:0007669"/>
    <property type="project" value="UniProtKB-UniRule"/>
</dbReference>
<dbReference type="CDD" id="cd24015">
    <property type="entry name" value="ASKHA_NBD_PanK-III"/>
    <property type="match status" value="1"/>
</dbReference>
<dbReference type="Gene3D" id="3.30.420.40">
    <property type="match status" value="2"/>
</dbReference>
<dbReference type="HAMAP" id="MF_01274">
    <property type="entry name" value="Pantothen_kinase_3"/>
    <property type="match status" value="1"/>
</dbReference>
<dbReference type="InterPro" id="IPR043129">
    <property type="entry name" value="ATPase_NBD"/>
</dbReference>
<dbReference type="InterPro" id="IPR004619">
    <property type="entry name" value="Type_III_PanK"/>
</dbReference>
<dbReference type="NCBIfam" id="TIGR00671">
    <property type="entry name" value="baf"/>
    <property type="match status" value="1"/>
</dbReference>
<dbReference type="NCBIfam" id="NF009868">
    <property type="entry name" value="PRK13328.1-4"/>
    <property type="match status" value="1"/>
</dbReference>
<dbReference type="PANTHER" id="PTHR34265">
    <property type="entry name" value="TYPE III PANTOTHENATE KINASE"/>
    <property type="match status" value="1"/>
</dbReference>
<dbReference type="PANTHER" id="PTHR34265:SF1">
    <property type="entry name" value="TYPE III PANTOTHENATE KINASE"/>
    <property type="match status" value="1"/>
</dbReference>
<dbReference type="Pfam" id="PF03309">
    <property type="entry name" value="Pan_kinase"/>
    <property type="match status" value="1"/>
</dbReference>
<dbReference type="SUPFAM" id="SSF53067">
    <property type="entry name" value="Actin-like ATPase domain"/>
    <property type="match status" value="2"/>
</dbReference>
<keyword id="KW-0067">ATP-binding</keyword>
<keyword id="KW-0173">Coenzyme A biosynthesis</keyword>
<keyword id="KW-0963">Cytoplasm</keyword>
<keyword id="KW-0418">Kinase</keyword>
<keyword id="KW-0547">Nucleotide-binding</keyword>
<keyword id="KW-0630">Potassium</keyword>
<keyword id="KW-0808">Transferase</keyword>
<name>COAX_BURA4</name>
<organism>
    <name type="scientific">Burkholderia ambifaria (strain MC40-6)</name>
    <dbReference type="NCBI Taxonomy" id="398577"/>
    <lineage>
        <taxon>Bacteria</taxon>
        <taxon>Pseudomonadati</taxon>
        <taxon>Pseudomonadota</taxon>
        <taxon>Betaproteobacteria</taxon>
        <taxon>Burkholderiales</taxon>
        <taxon>Burkholderiaceae</taxon>
        <taxon>Burkholderia</taxon>
        <taxon>Burkholderia cepacia complex</taxon>
    </lineage>
</organism>